<organism>
    <name type="scientific">Friend murine leukemia virus (isolate 57)</name>
    <name type="common">FrMLV</name>
    <dbReference type="NCBI Taxonomy" id="11796"/>
    <lineage>
        <taxon>Viruses</taxon>
        <taxon>Riboviria</taxon>
        <taxon>Pararnavirae</taxon>
        <taxon>Artverviricota</taxon>
        <taxon>Revtraviricetes</taxon>
        <taxon>Ortervirales</taxon>
        <taxon>Retroviridae</taxon>
        <taxon>Orthoretrovirinae</taxon>
        <taxon>Gammaretrovirus</taxon>
        <taxon>Murine leukemia virus</taxon>
    </lineage>
</organism>
<feature type="initiator methionine" description="Removed; by host" evidence="4">
    <location>
        <position position="1"/>
    </location>
</feature>
<feature type="chain" id="PRO_0000390811" description="Gag polyprotein" evidence="1">
    <location>
        <begin position="2"/>
        <end position="539"/>
    </location>
</feature>
<feature type="chain" id="PRO_0000040896" description="Matrix protein p15">
    <location>
        <begin position="2"/>
        <end position="132"/>
    </location>
</feature>
<feature type="chain" id="PRO_0000040897" description="RNA-binding phosphoprotein p12">
    <location>
        <begin position="133"/>
        <end position="216"/>
    </location>
</feature>
<feature type="chain" id="PRO_0000040898" description="Capsid protein p30">
    <location>
        <begin position="217"/>
        <end position="479"/>
    </location>
</feature>
<feature type="chain" id="PRO_0000040899" description="Nucleocapsid protein p10-Gag">
    <location>
        <begin position="480"/>
        <end position="539"/>
    </location>
</feature>
<feature type="zinc finger region" description="CCHC-type" evidence="5">
    <location>
        <begin position="503"/>
        <end position="520"/>
    </location>
</feature>
<feature type="region of interest" description="Disordered" evidence="6">
    <location>
        <begin position="111"/>
        <end position="222"/>
    </location>
</feature>
<feature type="region of interest" description="Interaction with host PIAS4" evidence="2">
    <location>
        <begin position="346"/>
        <end position="394"/>
    </location>
</feature>
<feature type="region of interest" description="Interaction with host UBE2I" evidence="2">
    <location>
        <begin position="431"/>
        <end position="436"/>
    </location>
</feature>
<feature type="region of interest" description="Disordered" evidence="6">
    <location>
        <begin position="435"/>
        <end position="539"/>
    </location>
</feature>
<feature type="coiled-coil region" evidence="4">
    <location>
        <begin position="439"/>
        <end position="479"/>
    </location>
</feature>
<feature type="short sequence motif" description="PTAP/PSAP motif" evidence="2">
    <location>
        <begin position="112"/>
        <end position="115"/>
    </location>
</feature>
<feature type="short sequence motif" description="LYPX(n)L motif" evidence="2">
    <location>
        <begin position="131"/>
        <end position="135"/>
    </location>
</feature>
<feature type="short sequence motif" description="PPXY motif" evidence="2">
    <location>
        <begin position="163"/>
        <end position="166"/>
    </location>
</feature>
<feature type="compositionally biased region" description="Pro residues" evidence="6">
    <location>
        <begin position="111"/>
        <end position="127"/>
    </location>
</feature>
<feature type="compositionally biased region" description="Basic and acidic residues" evidence="6">
    <location>
        <begin position="435"/>
        <end position="467"/>
    </location>
</feature>
<feature type="compositionally biased region" description="Basic and acidic residues" evidence="6">
    <location>
        <begin position="487"/>
        <end position="520"/>
    </location>
</feature>
<feature type="site" description="Cleavage; by viral protease" evidence="2">
    <location>
        <begin position="132"/>
        <end position="133"/>
    </location>
</feature>
<feature type="site" description="Cleavage; by viral protease" evidence="2">
    <location>
        <begin position="216"/>
        <end position="217"/>
    </location>
</feature>
<feature type="site" description="Cleavage; by viral protease" evidence="2">
    <location>
        <begin position="479"/>
        <end position="480"/>
    </location>
</feature>
<feature type="modified residue" description="Phosphoserine; by host" evidence="2">
    <location>
        <position position="193"/>
    </location>
</feature>
<feature type="lipid moiety-binding region" description="N-myristoyl glycine; by host" evidence="4">
    <location>
        <position position="2"/>
    </location>
</feature>
<sequence length="539" mass="61038">MGQTVTTPLSLTLDHWKDVERTAHNQSVEIRKRRWVTLCSAEWPTFNVGWPRDGTFNPDIITQVKIKVFSSGPHGHPDQVPYIVTWEALAADPPPWVKPFVHPKPPPLLLPPSAPSLPPEPPFPTPPQSSLYPALTSPLNTKPRPQVLPDSGGPLIDLLTEDPPPYRDPGPSSSDGNGGSGEVAPTEGAPDSSPMVSRLRGRREPPVADSTTSQAFPLRQGGNGQFQYWPFSSSDLYNWKNNNPSFSEDPAKLTALIESVLLTHQPTWDDCQQLLGTLLTGEEKQRVLLEARKAVRGEDGRPTQLPNDINDAFPLERPDWDYNTQRGRNHLVHYRQLLLAGLQNAGRSPTNLAKVKGITQGPNESPSAFLERLKEAYRRYTPYDPEDPGQETNVAMSFIWQSAPDIGRKLERLEDLKSKTLGDLVREAEKIFNKRETPEEREERIRRETEEKEERRRAEDEQREKERDRRRHREMSKLLATVISGQRQDRQGGERRRPQLDHDQCAYCKEKGHWARDCPKKPRGPRGPRPQASLLTLDD</sequence>
<protein>
    <recommendedName>
        <fullName>Gag polyprotein</fullName>
    </recommendedName>
    <alternativeName>
        <fullName>Core polyprotein</fullName>
    </alternativeName>
    <component>
        <recommendedName>
            <fullName>Matrix protein p15</fullName>
        </recommendedName>
    </component>
    <component>
        <recommendedName>
            <fullName>RNA-binding phosphoprotein p12</fullName>
        </recommendedName>
        <alternativeName>
            <fullName>pp12</fullName>
        </alternativeName>
    </component>
    <component>
        <recommendedName>
            <fullName>Capsid protein p30</fullName>
        </recommendedName>
    </component>
    <component>
        <recommendedName>
            <fullName>Nucleocapsid protein p10-Gag</fullName>
            <shortName>NC-gag</shortName>
        </recommendedName>
    </component>
</protein>
<proteinExistence type="inferred from homology"/>
<organismHost>
    <name type="scientific">Mus musculus</name>
    <name type="common">Mouse</name>
    <dbReference type="NCBI Taxonomy" id="10090"/>
</organismHost>
<gene>
    <name type="primary">gag</name>
</gene>
<comment type="function">
    <molecule>Gag polyprotein</molecule>
    <text evidence="2">Plays a role in budding and is processed by the viral protease during virion maturation outside the cell. During budding, it recruits, in a PPXY-dependent or independent manner, Nedd4-like ubiquitin ligases that conjugate ubiquitin molecules to Gag, or to Gag binding host factors. Interaction with HECT ubiquitin ligases probably links the viral protein to the host ESCRT pathway and facilitates release.</text>
</comment>
<comment type="function">
    <molecule>Matrix protein p15</molecule>
    <text evidence="2">Targets Gag and gag-pol polyproteins to the plasma membrane via a multipartite membrane binding signal, that includes its myristoylated N-terminus. Also mediates nuclear localization of the pre-integration complex.</text>
</comment>
<comment type="function">
    <molecule>RNA-binding phosphoprotein p12</molecule>
    <text evidence="2">Constituent of the pre-integration complex (PIC) which tethers the latter to mitotic chromosomes.</text>
</comment>
<comment type="function">
    <molecule>Capsid protein p30</molecule>
    <text evidence="3">Forms the spherical core of the virion that encapsulates the genomic RNA-nucleocapsid complex.</text>
</comment>
<comment type="function">
    <molecule>Nucleocapsid protein p10-Gag</molecule>
    <text evidence="2">Involved in the packaging and encapsidation of two copies of the genome. Binds with high affinity to conserved UCUG elements within the packaging signal, located near the 5'-end of the genome. This binding is dependent on genome dimerization.</text>
</comment>
<comment type="subunit">
    <molecule>Capsid protein p30</molecule>
    <text evidence="2 3">Homohexamer; further associates as homomultimer (By similarity). The virus core is composed of a lattice formed from hexagonal rings, each containing six capsid monomers. Interacts with mouse UBE2I and mouse PIAS4.</text>
</comment>
<comment type="subunit">
    <molecule>Gag polyprotein</molecule>
    <text evidence="2">Interacts (via PPXY motif) with host NEDD4. Interacts (via PSAP motif) with host TSG101. Interacts (via LYPX(n)L motif) with host PDCD6IP.</text>
</comment>
<comment type="subcellular location">
    <molecule>Gag polyprotein</molecule>
    <subcellularLocation>
        <location evidence="2">Virion</location>
    </subcellularLocation>
    <subcellularLocation>
        <location evidence="7">Host cell membrane</location>
        <topology evidence="2">Lipid-anchor</topology>
    </subcellularLocation>
    <subcellularLocation>
        <location evidence="7">Host endosome</location>
        <location evidence="7">Host multivesicular body</location>
    </subcellularLocation>
</comment>
<comment type="subcellular location">
    <molecule>Matrix protein p15</molecule>
    <subcellularLocation>
        <location evidence="2">Virion</location>
    </subcellularLocation>
</comment>
<comment type="subcellular location">
    <molecule>Capsid protein p30</molecule>
    <subcellularLocation>
        <location evidence="2">Virion</location>
    </subcellularLocation>
</comment>
<comment type="subcellular location">
    <molecule>Nucleocapsid protein p10-Gag</molecule>
    <subcellularLocation>
        <location evidence="2">Virion</location>
    </subcellularLocation>
</comment>
<comment type="subcellular location">
    <molecule>RNA-binding phosphoprotein p12</molecule>
    <subcellularLocation>
        <location evidence="2">Host cytoplasm</location>
    </subcellularLocation>
    <text evidence="2">Localizes to the host cytoplasm early in infection and binds to the mitotic chromosomes later on.</text>
</comment>
<comment type="alternative products">
    <event type="alternative initiation"/>
    <isoform>
        <id>P26807-1</id>
        <name>Gag polyprotein</name>
        <sequence type="displayed"/>
    </isoform>
    <isoform>
        <id>P0DOH0-1</id>
        <name>Glyco-Gag protein</name>
        <sequence type="external"/>
    </isoform>
</comment>
<comment type="domain">
    <molecule>Gag polyprotein</molecule>
    <text evidence="2">Late-budding domains (L domains) are short sequence motifs essential for viral particle budding. They recruit proteins of the host ESCRT machinery (Endosomal Sorting Complex Required for Transport) or ESCRT-associated proteins. RNA-binding phosphoprotein p12 contains one L domain: a PPXY motif which interacts with the WW domain 3 of NEDD4 E3 ubiquitin ligase. PPXY motif is essential for virus egress. Matrix protein p15 contains one L domain: a PTAP/PSAP motif, which interacts with the UEV domain of TSG101. The junction between the matrix protein p15 and RNA-binding phosphoprotein p12 also contains one L domain: a LYPX(n)L motif which interacts with PDCD6IP. Both PSAP and LYPX(n)L domains might play little to no role in budding and possibly drive residual virus release.</text>
</comment>
<comment type="PTM">
    <molecule>Gag polyprotein</molecule>
    <text evidence="2">Ubiquitinated by ITCH. Gag can recruit the ubiquitin ligase Itch in an L domain-independent manner to facilitate virus release via a mechanism that involves Gag ubiquitination.</text>
</comment>
<comment type="PTM">
    <molecule>Gag polyprotein</molecule>
    <text evidence="2">Specific enzymatic cleavages by the viral protease yield mature proteins. The protease is released by autocatalytic cleavage. The polyprotein is cleaved during and after budding, this process is termed maturation.</text>
</comment>
<comment type="PTM">
    <molecule>Capsid protein p30</molecule>
    <text evidence="2">Sumoylated; required for virus replication.</text>
</comment>
<comment type="PTM">
    <text evidence="2">RNA-binding phosphoprotein p12 is phosphorylated on serine residues.</text>
</comment>
<keyword id="KW-0024">Alternative initiation</keyword>
<keyword id="KW-0167">Capsid protein</keyword>
<keyword id="KW-0175">Coiled coil</keyword>
<keyword id="KW-1032">Host cell membrane</keyword>
<keyword id="KW-1035">Host cytoplasm</keyword>
<keyword id="KW-1039">Host endosome</keyword>
<keyword id="KW-1043">Host membrane</keyword>
<keyword id="KW-0945">Host-virus interaction</keyword>
<keyword id="KW-0449">Lipoprotein</keyword>
<keyword id="KW-0472">Membrane</keyword>
<keyword id="KW-0479">Metal-binding</keyword>
<keyword id="KW-0519">Myristate</keyword>
<keyword id="KW-0597">Phosphoprotein</keyword>
<keyword id="KW-0694">RNA-binding</keyword>
<keyword id="KW-0832">Ubl conjugation</keyword>
<keyword id="KW-1198">Viral budding</keyword>
<keyword id="KW-1187">Viral budding via the host ESCRT complexes</keyword>
<keyword id="KW-0468">Viral matrix protein</keyword>
<keyword id="KW-0543">Viral nucleoprotein</keyword>
<keyword id="KW-1188">Viral release from host cell</keyword>
<keyword id="KW-0946">Virion</keyword>
<keyword id="KW-0862">Zinc</keyword>
<keyword id="KW-0863">Zinc-finger</keyword>
<accession>P26807</accession>
<reference key="1">
    <citation type="submission" date="1990-09" db="EMBL/GenBank/DDBJ databases">
        <authorList>
            <person name="Friedrich R.W."/>
            <person name="Koch W."/>
            <person name="von Maydell-Livonius U."/>
            <person name="Schrewe H."/>
            <person name="Zimmermann W."/>
        </authorList>
    </citation>
    <scope>NUCLEOTIDE SEQUENCE [GENOMIC RNA]</scope>
</reference>
<reference key="2">
    <citation type="journal article" date="2003" name="Traffic">
        <title>Visualization of retroviral replication in living cells reveals budding into multivesicular bodies.</title>
        <authorList>
            <person name="Sherer N.M."/>
            <person name="Lehmann M.J."/>
            <person name="Jimenez-Soto L.F."/>
            <person name="Ingmundson A."/>
            <person name="Horner S.M."/>
            <person name="Cicchetti G."/>
            <person name="Allen P.G."/>
            <person name="Pypaert M."/>
            <person name="Cunningham J.M."/>
            <person name="Mothes W."/>
        </authorList>
    </citation>
    <scope>SUBCELLULAR LOCATION (GAG POLYPROTEIN)</scope>
</reference>
<dbReference type="EMBL" id="X02794">
    <property type="protein sequence ID" value="CAA26560.1"/>
    <property type="molecule type" value="Genomic_RNA"/>
</dbReference>
<dbReference type="SMR" id="P26807"/>
<dbReference type="Proteomes" id="UP000007776">
    <property type="component" value="Genome"/>
</dbReference>
<dbReference type="GO" id="GO:0020002">
    <property type="term" value="C:host cell plasma membrane"/>
    <property type="evidence" value="ECO:0007669"/>
    <property type="project" value="UniProtKB-SubCell"/>
</dbReference>
<dbReference type="GO" id="GO:0072494">
    <property type="term" value="C:host multivesicular body"/>
    <property type="evidence" value="ECO:0007669"/>
    <property type="project" value="UniProtKB-SubCell"/>
</dbReference>
<dbReference type="GO" id="GO:0016020">
    <property type="term" value="C:membrane"/>
    <property type="evidence" value="ECO:0007669"/>
    <property type="project" value="UniProtKB-KW"/>
</dbReference>
<dbReference type="GO" id="GO:0019013">
    <property type="term" value="C:viral nucleocapsid"/>
    <property type="evidence" value="ECO:0007669"/>
    <property type="project" value="UniProtKB-KW"/>
</dbReference>
<dbReference type="GO" id="GO:0003723">
    <property type="term" value="F:RNA binding"/>
    <property type="evidence" value="ECO:0007669"/>
    <property type="project" value="UniProtKB-KW"/>
</dbReference>
<dbReference type="GO" id="GO:0039660">
    <property type="term" value="F:structural constituent of virion"/>
    <property type="evidence" value="ECO:0007669"/>
    <property type="project" value="UniProtKB-KW"/>
</dbReference>
<dbReference type="GO" id="GO:0008270">
    <property type="term" value="F:zinc ion binding"/>
    <property type="evidence" value="ECO:0007669"/>
    <property type="project" value="UniProtKB-KW"/>
</dbReference>
<dbReference type="GO" id="GO:0039702">
    <property type="term" value="P:viral budding via host ESCRT complex"/>
    <property type="evidence" value="ECO:0007669"/>
    <property type="project" value="UniProtKB-KW"/>
</dbReference>
<dbReference type="Gene3D" id="1.10.150.180">
    <property type="entry name" value="Gamma-retroviral matrix domain"/>
    <property type="match status" value="1"/>
</dbReference>
<dbReference type="Gene3D" id="1.10.375.10">
    <property type="entry name" value="Human Immunodeficiency Virus Type 1 Capsid Protein"/>
    <property type="match status" value="1"/>
</dbReference>
<dbReference type="Gene3D" id="4.10.60.10">
    <property type="entry name" value="Zinc finger, CCHC-type"/>
    <property type="match status" value="1"/>
</dbReference>
<dbReference type="InterPro" id="IPR000840">
    <property type="entry name" value="G_retro_matrix"/>
</dbReference>
<dbReference type="InterPro" id="IPR036946">
    <property type="entry name" value="G_retro_matrix_sf"/>
</dbReference>
<dbReference type="InterPro" id="IPR002079">
    <property type="entry name" value="Gag_p12"/>
</dbReference>
<dbReference type="InterPro" id="IPR003036">
    <property type="entry name" value="Gag_P30"/>
</dbReference>
<dbReference type="InterPro" id="IPR008919">
    <property type="entry name" value="Retrov_capsid_N"/>
</dbReference>
<dbReference type="InterPro" id="IPR050462">
    <property type="entry name" value="Retroviral_Gag-Pol_poly"/>
</dbReference>
<dbReference type="InterPro" id="IPR010999">
    <property type="entry name" value="Retrovr_matrix"/>
</dbReference>
<dbReference type="InterPro" id="IPR001878">
    <property type="entry name" value="Znf_CCHC"/>
</dbReference>
<dbReference type="InterPro" id="IPR036875">
    <property type="entry name" value="Znf_CCHC_sf"/>
</dbReference>
<dbReference type="PANTHER" id="PTHR33166">
    <property type="entry name" value="GAG_P30 DOMAIN-CONTAINING PROTEIN"/>
    <property type="match status" value="1"/>
</dbReference>
<dbReference type="Pfam" id="PF01140">
    <property type="entry name" value="Gag_MA"/>
    <property type="match status" value="1"/>
</dbReference>
<dbReference type="Pfam" id="PF01141">
    <property type="entry name" value="Gag_p12"/>
    <property type="match status" value="1"/>
</dbReference>
<dbReference type="Pfam" id="PF02093">
    <property type="entry name" value="Gag_p30"/>
    <property type="match status" value="1"/>
</dbReference>
<dbReference type="Pfam" id="PF00098">
    <property type="entry name" value="zf-CCHC"/>
    <property type="match status" value="1"/>
</dbReference>
<dbReference type="SMART" id="SM00343">
    <property type="entry name" value="ZnF_C2HC"/>
    <property type="match status" value="1"/>
</dbReference>
<dbReference type="SUPFAM" id="SSF47836">
    <property type="entry name" value="Retroviral matrix proteins"/>
    <property type="match status" value="1"/>
</dbReference>
<dbReference type="SUPFAM" id="SSF47943">
    <property type="entry name" value="Retrovirus capsid protein, N-terminal core domain"/>
    <property type="match status" value="1"/>
</dbReference>
<dbReference type="SUPFAM" id="SSF57756">
    <property type="entry name" value="Retrovirus zinc finger-like domains"/>
    <property type="match status" value="1"/>
</dbReference>
<dbReference type="PROSITE" id="PS50158">
    <property type="entry name" value="ZF_CCHC"/>
    <property type="match status" value="1"/>
</dbReference>
<name>GAG_MLVF5</name>
<evidence type="ECO:0000250" key="1"/>
<evidence type="ECO:0000250" key="2">
    <source>
        <dbReference type="UniProtKB" id="P03332"/>
    </source>
</evidence>
<evidence type="ECO:0000250" key="3">
    <source>
        <dbReference type="UniProtKB" id="P03336"/>
    </source>
</evidence>
<evidence type="ECO:0000255" key="4"/>
<evidence type="ECO:0000255" key="5">
    <source>
        <dbReference type="PROSITE-ProRule" id="PRU00047"/>
    </source>
</evidence>
<evidence type="ECO:0000256" key="6">
    <source>
        <dbReference type="SAM" id="MobiDB-lite"/>
    </source>
</evidence>
<evidence type="ECO:0000269" key="7">
    <source>
    </source>
</evidence>